<organism>
    <name type="scientific">Mus musculus</name>
    <name type="common">Mouse</name>
    <dbReference type="NCBI Taxonomy" id="10090"/>
    <lineage>
        <taxon>Eukaryota</taxon>
        <taxon>Metazoa</taxon>
        <taxon>Chordata</taxon>
        <taxon>Craniata</taxon>
        <taxon>Vertebrata</taxon>
        <taxon>Euteleostomi</taxon>
        <taxon>Mammalia</taxon>
        <taxon>Eutheria</taxon>
        <taxon>Euarchontoglires</taxon>
        <taxon>Glires</taxon>
        <taxon>Rodentia</taxon>
        <taxon>Myomorpha</taxon>
        <taxon>Muroidea</taxon>
        <taxon>Muridae</taxon>
        <taxon>Murinae</taxon>
        <taxon>Mus</taxon>
        <taxon>Mus</taxon>
    </lineage>
</organism>
<keyword id="KW-0963">Cytoplasm</keyword>
<keyword id="KW-0539">Nucleus</keyword>
<keyword id="KW-1185">Reference proteome</keyword>
<keyword id="KW-0346">Stress response</keyword>
<sequence>MAKIILRHLIETPVRYQEEFEARGLEDCRLDHTLYALPGPTIEDLSKARGAGTPQALAEDSASTEKPPGEGKSRFQILLDVVQFLPEDIIIQTFEGWLLIKAQHGTRMDEHGFISRSFTRQYKLPDGVETKDLSAILCHDGILVVEVKDSLGTK</sequence>
<evidence type="ECO:0000250" key="1"/>
<evidence type="ECO:0000255" key="2">
    <source>
        <dbReference type="PROSITE-ProRule" id="PRU00285"/>
    </source>
</evidence>
<evidence type="ECO:0000256" key="3">
    <source>
        <dbReference type="SAM" id="MobiDB-lite"/>
    </source>
</evidence>
<dbReference type="EMBL" id="AF203375">
    <property type="protein sequence ID" value="AAF09589.1"/>
    <property type="molecule type" value="mRNA"/>
</dbReference>
<dbReference type="EMBL" id="AK009633">
    <property type="protein sequence ID" value="BAB26404.1"/>
    <property type="molecule type" value="mRNA"/>
</dbReference>
<dbReference type="EMBL" id="BC065388">
    <property type="protein sequence ID" value="AAH65388.1"/>
    <property type="molecule type" value="mRNA"/>
</dbReference>
<dbReference type="EMBL" id="BC092376">
    <property type="protein sequence ID" value="AAH92376.1"/>
    <property type="molecule type" value="mRNA"/>
</dbReference>
<dbReference type="CCDS" id="CCDS26785.1"/>
<dbReference type="RefSeq" id="NP_064344.1">
    <property type="nucleotide sequence ID" value="NM_019960.2"/>
</dbReference>
<dbReference type="SMR" id="Q9QZ57"/>
<dbReference type="FunCoup" id="Q9QZ57">
    <property type="interactions" value="1020"/>
</dbReference>
<dbReference type="STRING" id="10090.ENSMUSP00000054193"/>
<dbReference type="GlyGen" id="Q9QZ57">
    <property type="glycosylation" value="1 site"/>
</dbReference>
<dbReference type="PhosphoSitePlus" id="Q9QZ57"/>
<dbReference type="jPOST" id="Q9QZ57"/>
<dbReference type="PaxDb" id="10090-ENSMUSP00000054193"/>
<dbReference type="ProteomicsDB" id="267168"/>
<dbReference type="Antibodypedia" id="23356">
    <property type="antibodies" value="50 antibodies from 14 providers"/>
</dbReference>
<dbReference type="DNASU" id="56534"/>
<dbReference type="Ensembl" id="ENSMUST00000054650.5">
    <property type="protein sequence ID" value="ENSMUSP00000054193.5"/>
    <property type="gene ID" value="ENSMUSG00000051456.5"/>
</dbReference>
<dbReference type="GeneID" id="56534"/>
<dbReference type="KEGG" id="mmu:56534"/>
<dbReference type="UCSC" id="uc007rxi.2">
    <property type="organism name" value="mouse"/>
</dbReference>
<dbReference type="AGR" id="MGI:1928479"/>
<dbReference type="CTD" id="8988"/>
<dbReference type="MGI" id="MGI:1928479">
    <property type="gene designation" value="Hspb3"/>
</dbReference>
<dbReference type="VEuPathDB" id="HostDB:ENSMUSG00000051456"/>
<dbReference type="eggNOG" id="KOG3591">
    <property type="taxonomic scope" value="Eukaryota"/>
</dbReference>
<dbReference type="GeneTree" id="ENSGT00940000161247"/>
<dbReference type="HOGENOM" id="CLU_151649_0_0_1"/>
<dbReference type="InParanoid" id="Q9QZ57"/>
<dbReference type="OMA" id="HGPRMDE"/>
<dbReference type="OrthoDB" id="1431247at2759"/>
<dbReference type="PhylomeDB" id="Q9QZ57"/>
<dbReference type="TreeFam" id="TF105049"/>
<dbReference type="BioGRID-ORCS" id="56534">
    <property type="hits" value="0 hits in 76 CRISPR screens"/>
</dbReference>
<dbReference type="ChiTaRS" id="Hspb3">
    <property type="organism name" value="mouse"/>
</dbReference>
<dbReference type="PRO" id="PR:Q9QZ57"/>
<dbReference type="Proteomes" id="UP000000589">
    <property type="component" value="Chromosome 13"/>
</dbReference>
<dbReference type="RNAct" id="Q9QZ57">
    <property type="molecule type" value="protein"/>
</dbReference>
<dbReference type="Bgee" id="ENSMUSG00000051456">
    <property type="expression patterns" value="Expressed in temporalis muscle and 95 other cell types or tissues"/>
</dbReference>
<dbReference type="GO" id="GO:0005737">
    <property type="term" value="C:cytoplasm"/>
    <property type="evidence" value="ECO:0000250"/>
    <property type="project" value="UniProtKB"/>
</dbReference>
<dbReference type="GO" id="GO:0016607">
    <property type="term" value="C:nuclear speck"/>
    <property type="evidence" value="ECO:0007669"/>
    <property type="project" value="Ensembl"/>
</dbReference>
<dbReference type="GO" id="GO:0005634">
    <property type="term" value="C:nucleus"/>
    <property type="evidence" value="ECO:0000250"/>
    <property type="project" value="UniProtKB"/>
</dbReference>
<dbReference type="CDD" id="cd06477">
    <property type="entry name" value="ACD_HspB3_Like"/>
    <property type="match status" value="1"/>
</dbReference>
<dbReference type="FunFam" id="2.60.40.790:FF:000046">
    <property type="entry name" value="Heat shock protein beta-3"/>
    <property type="match status" value="1"/>
</dbReference>
<dbReference type="Gene3D" id="2.60.40.790">
    <property type="match status" value="1"/>
</dbReference>
<dbReference type="InterPro" id="IPR002068">
    <property type="entry name" value="A-crystallin/Hsp20_dom"/>
</dbReference>
<dbReference type="InterPro" id="IPR001436">
    <property type="entry name" value="Alpha-crystallin/sHSP_animal"/>
</dbReference>
<dbReference type="InterPro" id="IPR008978">
    <property type="entry name" value="HSP20-like_chaperone"/>
</dbReference>
<dbReference type="InterPro" id="IPR033894">
    <property type="entry name" value="HSPB3"/>
</dbReference>
<dbReference type="PANTHER" id="PTHR47097">
    <property type="entry name" value="HEAT SHOCK PROTEIN BETA-3"/>
    <property type="match status" value="1"/>
</dbReference>
<dbReference type="PANTHER" id="PTHR47097:SF1">
    <property type="entry name" value="HEAT SHOCK PROTEIN BETA-3"/>
    <property type="match status" value="1"/>
</dbReference>
<dbReference type="Pfam" id="PF00011">
    <property type="entry name" value="HSP20"/>
    <property type="match status" value="1"/>
</dbReference>
<dbReference type="PRINTS" id="PR00299">
    <property type="entry name" value="ACRYSTALLIN"/>
</dbReference>
<dbReference type="SUPFAM" id="SSF49764">
    <property type="entry name" value="HSP20-like chaperones"/>
    <property type="match status" value="1"/>
</dbReference>
<dbReference type="PROSITE" id="PS01031">
    <property type="entry name" value="SHSP"/>
    <property type="match status" value="1"/>
</dbReference>
<name>HSPB3_MOUSE</name>
<reference key="1">
    <citation type="submission" date="1999-11" db="EMBL/GenBank/DDBJ databases">
        <title>Cloning and characterization of mouse small heat shock protein B3 (HSPB3).</title>
        <authorList>
            <person name="Tam W.H."/>
            <person name="Chan K.K."/>
            <person name="Tsui S.K.W."/>
            <person name="Fung K.P."/>
            <person name="Lee C.Y."/>
            <person name="Waye M.M.Y."/>
        </authorList>
    </citation>
    <scope>NUCLEOTIDE SEQUENCE [MRNA]</scope>
    <source>
        <strain>C57BL/6J</strain>
    </source>
</reference>
<reference key="2">
    <citation type="journal article" date="2005" name="Science">
        <title>The transcriptional landscape of the mammalian genome.</title>
        <authorList>
            <person name="Carninci P."/>
            <person name="Kasukawa T."/>
            <person name="Katayama S."/>
            <person name="Gough J."/>
            <person name="Frith M.C."/>
            <person name="Maeda N."/>
            <person name="Oyama R."/>
            <person name="Ravasi T."/>
            <person name="Lenhard B."/>
            <person name="Wells C."/>
            <person name="Kodzius R."/>
            <person name="Shimokawa K."/>
            <person name="Bajic V.B."/>
            <person name="Brenner S.E."/>
            <person name="Batalov S."/>
            <person name="Forrest A.R."/>
            <person name="Zavolan M."/>
            <person name="Davis M.J."/>
            <person name="Wilming L.G."/>
            <person name="Aidinis V."/>
            <person name="Allen J.E."/>
            <person name="Ambesi-Impiombato A."/>
            <person name="Apweiler R."/>
            <person name="Aturaliya R.N."/>
            <person name="Bailey T.L."/>
            <person name="Bansal M."/>
            <person name="Baxter L."/>
            <person name="Beisel K.W."/>
            <person name="Bersano T."/>
            <person name="Bono H."/>
            <person name="Chalk A.M."/>
            <person name="Chiu K.P."/>
            <person name="Choudhary V."/>
            <person name="Christoffels A."/>
            <person name="Clutterbuck D.R."/>
            <person name="Crowe M.L."/>
            <person name="Dalla E."/>
            <person name="Dalrymple B.P."/>
            <person name="de Bono B."/>
            <person name="Della Gatta G."/>
            <person name="di Bernardo D."/>
            <person name="Down T."/>
            <person name="Engstrom P."/>
            <person name="Fagiolini M."/>
            <person name="Faulkner G."/>
            <person name="Fletcher C.F."/>
            <person name="Fukushima T."/>
            <person name="Furuno M."/>
            <person name="Futaki S."/>
            <person name="Gariboldi M."/>
            <person name="Georgii-Hemming P."/>
            <person name="Gingeras T.R."/>
            <person name="Gojobori T."/>
            <person name="Green R.E."/>
            <person name="Gustincich S."/>
            <person name="Harbers M."/>
            <person name="Hayashi Y."/>
            <person name="Hensch T.K."/>
            <person name="Hirokawa N."/>
            <person name="Hill D."/>
            <person name="Huminiecki L."/>
            <person name="Iacono M."/>
            <person name="Ikeo K."/>
            <person name="Iwama A."/>
            <person name="Ishikawa T."/>
            <person name="Jakt M."/>
            <person name="Kanapin A."/>
            <person name="Katoh M."/>
            <person name="Kawasawa Y."/>
            <person name="Kelso J."/>
            <person name="Kitamura H."/>
            <person name="Kitano H."/>
            <person name="Kollias G."/>
            <person name="Krishnan S.P."/>
            <person name="Kruger A."/>
            <person name="Kummerfeld S.K."/>
            <person name="Kurochkin I.V."/>
            <person name="Lareau L.F."/>
            <person name="Lazarevic D."/>
            <person name="Lipovich L."/>
            <person name="Liu J."/>
            <person name="Liuni S."/>
            <person name="McWilliam S."/>
            <person name="Madan Babu M."/>
            <person name="Madera M."/>
            <person name="Marchionni L."/>
            <person name="Matsuda H."/>
            <person name="Matsuzawa S."/>
            <person name="Miki H."/>
            <person name="Mignone F."/>
            <person name="Miyake S."/>
            <person name="Morris K."/>
            <person name="Mottagui-Tabar S."/>
            <person name="Mulder N."/>
            <person name="Nakano N."/>
            <person name="Nakauchi H."/>
            <person name="Ng P."/>
            <person name="Nilsson R."/>
            <person name="Nishiguchi S."/>
            <person name="Nishikawa S."/>
            <person name="Nori F."/>
            <person name="Ohara O."/>
            <person name="Okazaki Y."/>
            <person name="Orlando V."/>
            <person name="Pang K.C."/>
            <person name="Pavan W.J."/>
            <person name="Pavesi G."/>
            <person name="Pesole G."/>
            <person name="Petrovsky N."/>
            <person name="Piazza S."/>
            <person name="Reed J."/>
            <person name="Reid J.F."/>
            <person name="Ring B.Z."/>
            <person name="Ringwald M."/>
            <person name="Rost B."/>
            <person name="Ruan Y."/>
            <person name="Salzberg S.L."/>
            <person name="Sandelin A."/>
            <person name="Schneider C."/>
            <person name="Schoenbach C."/>
            <person name="Sekiguchi K."/>
            <person name="Semple C.A."/>
            <person name="Seno S."/>
            <person name="Sessa L."/>
            <person name="Sheng Y."/>
            <person name="Shibata Y."/>
            <person name="Shimada H."/>
            <person name="Shimada K."/>
            <person name="Silva D."/>
            <person name="Sinclair B."/>
            <person name="Sperling S."/>
            <person name="Stupka E."/>
            <person name="Sugiura K."/>
            <person name="Sultana R."/>
            <person name="Takenaka Y."/>
            <person name="Taki K."/>
            <person name="Tammoja K."/>
            <person name="Tan S.L."/>
            <person name="Tang S."/>
            <person name="Taylor M.S."/>
            <person name="Tegner J."/>
            <person name="Teichmann S.A."/>
            <person name="Ueda H.R."/>
            <person name="van Nimwegen E."/>
            <person name="Verardo R."/>
            <person name="Wei C.L."/>
            <person name="Yagi K."/>
            <person name="Yamanishi H."/>
            <person name="Zabarovsky E."/>
            <person name="Zhu S."/>
            <person name="Zimmer A."/>
            <person name="Hide W."/>
            <person name="Bult C."/>
            <person name="Grimmond S.M."/>
            <person name="Teasdale R.D."/>
            <person name="Liu E.T."/>
            <person name="Brusic V."/>
            <person name="Quackenbush J."/>
            <person name="Wahlestedt C."/>
            <person name="Mattick J.S."/>
            <person name="Hume D.A."/>
            <person name="Kai C."/>
            <person name="Sasaki D."/>
            <person name="Tomaru Y."/>
            <person name="Fukuda S."/>
            <person name="Kanamori-Katayama M."/>
            <person name="Suzuki M."/>
            <person name="Aoki J."/>
            <person name="Arakawa T."/>
            <person name="Iida J."/>
            <person name="Imamura K."/>
            <person name="Itoh M."/>
            <person name="Kato T."/>
            <person name="Kawaji H."/>
            <person name="Kawagashira N."/>
            <person name="Kawashima T."/>
            <person name="Kojima M."/>
            <person name="Kondo S."/>
            <person name="Konno H."/>
            <person name="Nakano K."/>
            <person name="Ninomiya N."/>
            <person name="Nishio T."/>
            <person name="Okada M."/>
            <person name="Plessy C."/>
            <person name="Shibata K."/>
            <person name="Shiraki T."/>
            <person name="Suzuki S."/>
            <person name="Tagami M."/>
            <person name="Waki K."/>
            <person name="Watahiki A."/>
            <person name="Okamura-Oho Y."/>
            <person name="Suzuki H."/>
            <person name="Kawai J."/>
            <person name="Hayashizaki Y."/>
        </authorList>
    </citation>
    <scope>NUCLEOTIDE SEQUENCE [LARGE SCALE MRNA]</scope>
    <source>
        <strain>C57BL/6J</strain>
        <tissue>Tongue</tissue>
    </source>
</reference>
<reference key="3">
    <citation type="journal article" date="2004" name="Genome Res.">
        <title>The status, quality, and expansion of the NIH full-length cDNA project: the Mammalian Gene Collection (MGC).</title>
        <authorList>
            <consortium name="The MGC Project Team"/>
        </authorList>
    </citation>
    <scope>NUCLEOTIDE SEQUENCE [LARGE SCALE MRNA]</scope>
    <source>
        <strain>C57BL/6J</strain>
        <tissue>Eye</tissue>
        <tissue>Mammary gland</tissue>
    </source>
</reference>
<comment type="function">
    <text evidence="1">Inhibitor of actin polymerization.</text>
</comment>
<comment type="subcellular location">
    <subcellularLocation>
        <location evidence="1">Cytoplasm</location>
    </subcellularLocation>
    <subcellularLocation>
        <location evidence="1">Nucleus</location>
    </subcellularLocation>
    <text evidence="1">Translocates to nuclear foci during heat shock.</text>
</comment>
<comment type="similarity">
    <text evidence="2">Belongs to the small heat shock protein (HSP20) family.</text>
</comment>
<feature type="chain" id="PRO_0000125937" description="Heat shock protein beta-3">
    <location>
        <begin position="1"/>
        <end position="154"/>
    </location>
</feature>
<feature type="domain" description="sHSP" evidence="2">
    <location>
        <begin position="57"/>
        <end position="154"/>
    </location>
</feature>
<feature type="region of interest" description="Disordered" evidence="3">
    <location>
        <begin position="48"/>
        <end position="71"/>
    </location>
</feature>
<proteinExistence type="evidence at transcript level"/>
<gene>
    <name type="primary">Hspb3</name>
</gene>
<protein>
    <recommendedName>
        <fullName>Heat shock protein beta-3</fullName>
        <shortName>HspB3</shortName>
    </recommendedName>
</protein>
<accession>Q9QZ57</accession>
<accession>Q569N3</accession>